<feature type="chain" id="PRO_0000274574" description="SH3 domain-binding protein 4">
    <location>
        <begin position="1"/>
        <end position="963"/>
    </location>
</feature>
<feature type="domain" description="SH3 1" evidence="2">
    <location>
        <begin position="55"/>
        <end position="114"/>
    </location>
</feature>
<feature type="domain" description="ZU5" evidence="3">
    <location>
        <begin position="317"/>
        <end position="454"/>
    </location>
</feature>
<feature type="domain" description="SH3 2" evidence="2">
    <location>
        <begin position="654"/>
        <end position="724"/>
    </location>
</feature>
<feature type="modified residue" description="Phosphoserine" evidence="13">
    <location>
        <position position="131"/>
    </location>
</feature>
<feature type="modified residue" description="Phosphoserine" evidence="12 15">
    <location>
        <position position="246"/>
    </location>
</feature>
<feature type="modified residue" description="Phosphoserine" evidence="1">
    <location>
        <position position="251"/>
    </location>
</feature>
<feature type="modified residue" description="Phosphoserine" evidence="15">
    <location>
        <position position="279"/>
    </location>
</feature>
<feature type="modified residue" description="Phosphoserine" evidence="16">
    <location>
        <position position="296"/>
    </location>
</feature>
<feature type="modified residue" description="Phosphoserine" evidence="14 15">
    <location>
        <position position="637"/>
    </location>
</feature>
<feature type="splice variant" id="VSP_022823" description="In isoform 2." evidence="10">
    <location>
        <begin position="515"/>
        <end position="925"/>
    </location>
</feature>
<feature type="sequence variant" id="VAR_030330" description="In dbSNP:rs3731644." evidence="6">
    <original>M</original>
    <variation>T</variation>
    <location>
        <position position="155"/>
    </location>
</feature>
<feature type="sequence variant" id="VAR_030331" description="In dbSNP:rs3731646." evidence="6">
    <original>A</original>
    <variation>T</variation>
    <location>
        <position position="197"/>
    </location>
</feature>
<feature type="mutagenesis site" description="Loss of function. Loss of targeting to the clathrin-coated pits and vesicles. Loss of interaction with DNM2, RRAGB and RRAGC. No effect on localization to the plasma membrane." evidence="6 7">
    <original>W</original>
    <variation>A</variation>
    <location>
        <position position="92"/>
    </location>
</feature>
<feature type="sequence conflict" description="In Ref. 2; ABB18377." evidence="11" ref="2">
    <original>D</original>
    <variation>N</variation>
    <location>
        <position position="235"/>
    </location>
</feature>
<protein>
    <recommendedName>
        <fullName>SH3 domain-binding protein 4</fullName>
    </recommendedName>
    <alternativeName>
        <fullName>EH-binding protein 10</fullName>
    </alternativeName>
    <alternativeName>
        <fullName>Transferrin receptor-trafficking protein</fullName>
    </alternativeName>
</protein>
<gene>
    <name type="primary">SH3BP4</name>
    <name type="synonym">BOG25</name>
    <name type="synonym">EHB10</name>
    <name type="synonym">TTP</name>
</gene>
<name>SH3B4_HUMAN</name>
<proteinExistence type="evidence at protein level"/>
<evidence type="ECO:0000250" key="1">
    <source>
        <dbReference type="UniProtKB" id="Q921I6"/>
    </source>
</evidence>
<evidence type="ECO:0000255" key="2">
    <source>
        <dbReference type="PROSITE-ProRule" id="PRU00192"/>
    </source>
</evidence>
<evidence type="ECO:0000255" key="3">
    <source>
        <dbReference type="PROSITE-ProRule" id="PRU00485"/>
    </source>
</evidence>
<evidence type="ECO:0000269" key="4">
    <source>
    </source>
</evidence>
<evidence type="ECO:0000269" key="5">
    <source>
    </source>
</evidence>
<evidence type="ECO:0000269" key="6">
    <source>
    </source>
</evidence>
<evidence type="ECO:0000269" key="7">
    <source>
    </source>
</evidence>
<evidence type="ECO:0000269" key="8">
    <source>
    </source>
</evidence>
<evidence type="ECO:0000269" key="9">
    <source>
    </source>
</evidence>
<evidence type="ECO:0000303" key="10">
    <source>
    </source>
</evidence>
<evidence type="ECO:0000305" key="11"/>
<evidence type="ECO:0007744" key="12">
    <source>
    </source>
</evidence>
<evidence type="ECO:0007744" key="13">
    <source>
    </source>
</evidence>
<evidence type="ECO:0007744" key="14">
    <source>
    </source>
</evidence>
<evidence type="ECO:0007744" key="15">
    <source>
    </source>
</evidence>
<evidence type="ECO:0007744" key="16">
    <source>
    </source>
</evidence>
<comment type="function">
    <text evidence="6 7">May function in transferrin receptor internalization at the plasma membrane through a cargo-specific control of clathrin-mediated endocytosis. Alternatively, may act as a negative regulator of the amino acid-induced TOR signaling by inhibiting the formation of active Rag GTPase complexes. Preferentially binds inactive Rag GTPase complexes and prevents their interaction with the mTORC1 complex inhibiting its relocalization to lysosomes and its activation. Thereby, may indirectly regulate cell growth, proliferation and autophagy.</text>
</comment>
<comment type="subunit">
    <text evidence="6 7 9">Homodimer or homooligomer. Interacts with DNM2, EPS15, clathrin, the adapter protein complex 2/AP-2 and TFRC. Interacts with the Rag GTPases RRAGA, RRAGB, RRAGC and RRAGD; the interaction is most probably direct, preferentially occurs with their inactive GDP-bound form and is negatively regulated by amino acids.</text>
</comment>
<comment type="subunit">
    <text evidence="8">(Microbial infection) Interacts with molluscum contagiosum virus protein MC159L; this interaction is important for the suppression of autophagy.</text>
</comment>
<comment type="interaction">
    <interactant intactId="EBI-1049513">
        <id>Q9P0V3</id>
    </interactant>
    <interactant intactId="EBI-349854">
        <id>P13569</id>
        <label>CFTR</label>
    </interactant>
    <organismsDiffer>false</organismsDiffer>
    <experiments>4</experiments>
</comment>
<comment type="interaction">
    <interactant intactId="EBI-1049513">
        <id>Q9P0V3</id>
    </interactant>
    <interactant intactId="EBI-2652948">
        <id>Q9ULV3</id>
        <label>CIZ1</label>
    </interactant>
    <organismsDiffer>false</organismsDiffer>
    <experiments>2</experiments>
</comment>
<comment type="interaction">
    <interactant intactId="EBI-1049513">
        <id>Q9P0V3</id>
    </interactant>
    <interactant intactId="EBI-346547">
        <id>P50570</id>
        <label>DNM2</label>
    </interactant>
    <organismsDiffer>false</organismsDiffer>
    <experiments>3</experiments>
</comment>
<comment type="interaction">
    <interactant intactId="EBI-1049513">
        <id>Q9P0V3</id>
    </interactant>
    <interactant intactId="EBI-396684">
        <id>P42566</id>
        <label>EPS15</label>
    </interactant>
    <organismsDiffer>false</organismsDiffer>
    <experiments>2</experiments>
</comment>
<comment type="interaction">
    <interactant intactId="EBI-1049513">
        <id>Q9P0V3</id>
    </interactant>
    <interactant intactId="EBI-373132">
        <id>O14908</id>
        <label>GIPC1</label>
    </interactant>
    <organismsDiffer>false</organismsDiffer>
    <experiments>4</experiments>
</comment>
<comment type="interaction">
    <interactant intactId="EBI-1049513">
        <id>Q9P0V3</id>
    </interactant>
    <interactant intactId="EBI-2652984">
        <id>Q9HB21</id>
        <label>PLEKHA1</label>
    </interactant>
    <organismsDiffer>false</organismsDiffer>
    <experiments>2</experiments>
</comment>
<comment type="interaction">
    <interactant intactId="EBI-1049513">
        <id>Q9P0V3</id>
    </interactant>
    <interactant intactId="EBI-1049513">
        <id>Q9P0V3</id>
        <label>SH3BP4</label>
    </interactant>
    <organismsDiffer>false</organismsDiffer>
    <experiments>2</experiments>
</comment>
<comment type="interaction">
    <interactant intactId="EBI-1049513">
        <id>Q9P0V3</id>
    </interactant>
    <interactant intactId="EBI-355727">
        <id>P02786</id>
        <label>TFRC</label>
    </interactant>
    <organismsDiffer>false</organismsDiffer>
    <experiments>6</experiments>
</comment>
<comment type="interaction">
    <interactant intactId="EBI-1049513">
        <id>Q9P0V3</id>
    </interactant>
    <interactant intactId="EBI-356498">
        <id>P62258</id>
        <label>YWHAE</label>
    </interactant>
    <organismsDiffer>false</organismsDiffer>
    <experiments>4</experiments>
</comment>
<comment type="interaction">
    <interactant intactId="EBI-1049513">
        <id>Q9P0V3</id>
    </interactant>
    <interactant intactId="EBI-359832">
        <id>P61981</id>
        <label>YWHAG</label>
    </interactant>
    <organismsDiffer>false</organismsDiffer>
    <experiments>7</experiments>
</comment>
<comment type="interaction">
    <interactant intactId="EBI-1049513">
        <id>Q9P0V3</id>
    </interactant>
    <interactant intactId="EBI-347088">
        <id>P63104</id>
        <label>YWHAZ</label>
    </interactant>
    <organismsDiffer>false</organismsDiffer>
    <experiments>3</experiments>
</comment>
<comment type="interaction">
    <interactant intactId="EBI-1049513">
        <id>Q9P0V3</id>
    </interactant>
    <interactant intactId="EBI-349613">
        <id>P39052</id>
        <label>Dnm2</label>
    </interactant>
    <organismsDiffer>true</organismsDiffer>
    <experiments>5</experiments>
</comment>
<comment type="subcellular location">
    <subcellularLocation>
        <location>Membrane</location>
        <location>Clathrin-coated pit</location>
    </subcellularLocation>
    <subcellularLocation>
        <location>Cytoplasmic vesicle</location>
        <location>Clathrin-coated vesicle</location>
    </subcellularLocation>
    <subcellularLocation>
        <location evidence="11">Nucleus</location>
    </subcellularLocation>
    <text>Specifically associated with transferrin receptor-containing clathrin-coated pits and clathrin-coated vesicles. May also localize to the nucleus.</text>
</comment>
<comment type="alternative products">
    <event type="alternative splicing"/>
    <isoform>
        <id>Q9P0V3-1</id>
        <name>1</name>
        <sequence type="displayed"/>
    </isoform>
    <isoform>
        <id>Q9P0V3-2</id>
        <name>2</name>
        <sequence type="described" ref="VSP_022823"/>
    </isoform>
</comment>
<comment type="tissue specificity">
    <text evidence="4 5">Expressed in all tissues tested with higher expression in pancreas. Expressed by retinal pigment epithelial cells (at protein level).</text>
</comment>
<comment type="domain">
    <text>The SH3 domain mediates localization to the clathrin-coated pits and vesicles. The SH3 domain mediates interaction with DNM2 and the cytoplasmic part of TFRC with a lower affinity. The SH3 domain also mediates interaction with RRAGB, RRAGC and is required for the negative regulation of mTORC1.</text>
</comment>
<comment type="PTM">
    <text evidence="6">Phosphorylated upon EGF stimulation. Phosphorylation prevents interaction with DNM2.</text>
</comment>
<comment type="miscellaneous">
    <text>Overexpression or depletion of SH3BP4 result in a specific decrease of the transferrin receptor endocytosis that can be rescued by DNM2 overexpression.</text>
</comment>
<comment type="miscellaneous">
    <molecule>Isoform 2</molecule>
    <text evidence="11">Dubious isoform produced through aberrant splice sites.</text>
</comment>
<accession>Q9P0V3</accession>
<accession>O95082</accession>
<accession>Q309A3</accession>
<accession>Q53QD0</accession>
<accession>Q53TD1</accession>
<organism>
    <name type="scientific">Homo sapiens</name>
    <name type="common">Human</name>
    <dbReference type="NCBI Taxonomy" id="9606"/>
    <lineage>
        <taxon>Eukaryota</taxon>
        <taxon>Metazoa</taxon>
        <taxon>Chordata</taxon>
        <taxon>Craniata</taxon>
        <taxon>Vertebrata</taxon>
        <taxon>Euteleostomi</taxon>
        <taxon>Mammalia</taxon>
        <taxon>Eutheria</taxon>
        <taxon>Euarchontoglires</taxon>
        <taxon>Primates</taxon>
        <taxon>Haplorrhini</taxon>
        <taxon>Catarrhini</taxon>
        <taxon>Hominidae</taxon>
        <taxon>Homo</taxon>
    </lineage>
</organism>
<keyword id="KW-0025">Alternative splicing</keyword>
<keyword id="KW-0168">Coated pit</keyword>
<keyword id="KW-0968">Cytoplasmic vesicle</keyword>
<keyword id="KW-0254">Endocytosis</keyword>
<keyword id="KW-0472">Membrane</keyword>
<keyword id="KW-0539">Nucleus</keyword>
<keyword id="KW-0597">Phosphoprotein</keyword>
<keyword id="KW-1267">Proteomics identification</keyword>
<keyword id="KW-1185">Reference proteome</keyword>
<keyword id="KW-0677">Repeat</keyword>
<keyword id="KW-0728">SH3 domain</keyword>
<sequence length="963" mass="107496">MAAQRIRAANSNGLPRCKSEGTLIDLSEGFSETSFNDIKVPSPSALLVDNPTPFGNAKEVIAIKDYCPTNFTTLKFSKGDHLYVLDTSGGEWWYAHNTTEMGYIPSSYVQPLNYRNSTLSDSGMIDNLPDSPDEVAKELELLGGWTDDKKVPGRMYSNNPFWNGVQTNPFLNGNVPVMPSLDELNPKSTVDLLLFDAGTSSFTESSSATTNSTGNIFDELPVTNGLHAEPPVRRDNPFFRSKRSYSLSELSVLQAKSDAPTSSSFFTGLKSPAPEQFQSREDFRTAWLNHRKLARSCHDLDLLGQSPGWGQTQAVETNIVCKLDSSGGAVQLPDTSISIHVPEGHVAPGETQQISMKALLDPPLELNSDRSCSISPVLEVKLSNLEVKTSIILEMKVSAEIKNDLFSKSTVGLQCLRSDSKEGPYVSVPLNCSCGDTVQAQLHNLEPCMYVAVVAHGPSILYPSTVWDFINKKVTVGLYGPKHIHPSFKTVVTIFGHDCAPKTLLVSEVTRQAPNPAPVALQLWGKHQFVLSRPQDLKVCMFSNMTNYEVKASEQAKVVRGFQLKLGKVSRLIFPITSQNPNELSDFTLRVQVKDDQEAILTQFCVQTPQPPPKSAIKPSGQRRFLKKNEVGKIILSPFATTTKYPTFQDRPVSSLKFGKLLKTVVRQNKNHYLLEYKKGDGIALLSEERVRLRGQLWTKEWYIGYYQGRVGLVHTKNVLVVGRARPSLCSGPELSTSVLLEQILRPCKFLTYIYASVRTLLMENISSWRSFADALGYVNLPLTFFCRAELDSEPERVASVLEKLKEDCNNTENKERKSFQKELVMALLKMDCQGLVVRLIQDFVLLTTAVEVAQRWRELAEKLAKVSKQQMDAYESPHRDRNGVVDSEAMWKPAYDFLLTWSHQIGDSYRDVIQELHLGLDKMKNPITKRWKHLTGTLILVNSLDVLRAAAFSPADQDDFVI</sequence>
<dbReference type="EMBL" id="AF147747">
    <property type="protein sequence ID" value="AAF33022.1"/>
    <property type="molecule type" value="mRNA"/>
</dbReference>
<dbReference type="EMBL" id="DQ232895">
    <property type="protein sequence ID" value="ABB18377.1"/>
    <property type="molecule type" value="mRNA"/>
</dbReference>
<dbReference type="EMBL" id="AC010148">
    <property type="protein sequence ID" value="AAY14916.1"/>
    <property type="molecule type" value="Genomic_DNA"/>
</dbReference>
<dbReference type="EMBL" id="AC114814">
    <property type="protein sequence ID" value="AAY24025.1"/>
    <property type="molecule type" value="Genomic_DNA"/>
</dbReference>
<dbReference type="EMBL" id="BC057396">
    <property type="protein sequence ID" value="AAH57396.1"/>
    <property type="molecule type" value="mRNA"/>
</dbReference>
<dbReference type="EMBL" id="AF015043">
    <property type="protein sequence ID" value="AAD01551.1"/>
    <property type="molecule type" value="mRNA"/>
</dbReference>
<dbReference type="CCDS" id="CCDS2513.1">
    <molecule id="Q9P0V3-1"/>
</dbReference>
<dbReference type="RefSeq" id="NP_001358231.1">
    <molecule id="Q9P0V3-1"/>
    <property type="nucleotide sequence ID" value="NM_001371302.1"/>
</dbReference>
<dbReference type="RefSeq" id="NP_001358232.1">
    <molecule id="Q9P0V3-1"/>
    <property type="nucleotide sequence ID" value="NM_001371303.1"/>
</dbReference>
<dbReference type="RefSeq" id="NP_001358233.1">
    <molecule id="Q9P0V3-1"/>
    <property type="nucleotide sequence ID" value="NM_001371304.1"/>
</dbReference>
<dbReference type="RefSeq" id="NP_001358234.1">
    <molecule id="Q9P0V3-1"/>
    <property type="nucleotide sequence ID" value="NM_001371305.1"/>
</dbReference>
<dbReference type="RefSeq" id="NP_001358235.1">
    <molecule id="Q9P0V3-1"/>
    <property type="nucleotide sequence ID" value="NM_001371306.1"/>
</dbReference>
<dbReference type="RefSeq" id="NP_055336.1">
    <molecule id="Q9P0V3-1"/>
    <property type="nucleotide sequence ID" value="NM_014521.3"/>
</dbReference>
<dbReference type="RefSeq" id="XP_011509193.1">
    <property type="nucleotide sequence ID" value="XM_011510891.2"/>
</dbReference>
<dbReference type="RefSeq" id="XP_011509194.1">
    <property type="nucleotide sequence ID" value="XM_011510892.1"/>
</dbReference>
<dbReference type="RefSeq" id="XP_011509195.1">
    <molecule id="Q9P0V3-1"/>
    <property type="nucleotide sequence ID" value="XM_011510893.2"/>
</dbReference>
<dbReference type="RefSeq" id="XP_011509196.1">
    <property type="nucleotide sequence ID" value="XM_011510894.2"/>
</dbReference>
<dbReference type="RefSeq" id="XP_047299804.1">
    <molecule id="Q9P0V3-1"/>
    <property type="nucleotide sequence ID" value="XM_047443848.1"/>
</dbReference>
<dbReference type="RefSeq" id="XP_047299805.1">
    <molecule id="Q9P0V3-1"/>
    <property type="nucleotide sequence ID" value="XM_047443849.1"/>
</dbReference>
<dbReference type="RefSeq" id="XP_047299806.1">
    <molecule id="Q9P0V3-1"/>
    <property type="nucleotide sequence ID" value="XM_047443850.1"/>
</dbReference>
<dbReference type="RefSeq" id="XP_047299807.1">
    <molecule id="Q9P0V3-1"/>
    <property type="nucleotide sequence ID" value="XM_047443851.1"/>
</dbReference>
<dbReference type="RefSeq" id="XP_054197207.1">
    <molecule id="Q9P0V3-1"/>
    <property type="nucleotide sequence ID" value="XM_054341232.1"/>
</dbReference>
<dbReference type="RefSeq" id="XP_054197208.1">
    <molecule id="Q9P0V3-1"/>
    <property type="nucleotide sequence ID" value="XM_054341233.1"/>
</dbReference>
<dbReference type="RefSeq" id="XP_054197209.1">
    <molecule id="Q9P0V3-1"/>
    <property type="nucleotide sequence ID" value="XM_054341234.1"/>
</dbReference>
<dbReference type="RefSeq" id="XP_054197210.1">
    <molecule id="Q9P0V3-1"/>
    <property type="nucleotide sequence ID" value="XM_054341235.1"/>
</dbReference>
<dbReference type="RefSeq" id="XP_054197211.1">
    <molecule id="Q9P0V3-1"/>
    <property type="nucleotide sequence ID" value="XM_054341236.1"/>
</dbReference>
<dbReference type="SMR" id="Q9P0V3"/>
<dbReference type="BioGRID" id="117194">
    <property type="interactions" value="137"/>
</dbReference>
<dbReference type="ComplexPortal" id="CPX-7724">
    <property type="entry name" value="LIFT actin modulation complex"/>
</dbReference>
<dbReference type="FunCoup" id="Q9P0V3">
    <property type="interactions" value="690"/>
</dbReference>
<dbReference type="IntAct" id="Q9P0V3">
    <property type="interactions" value="61"/>
</dbReference>
<dbReference type="MINT" id="Q9P0V3"/>
<dbReference type="STRING" id="9606.ENSP00000386862"/>
<dbReference type="GlyGen" id="Q9P0V3">
    <property type="glycosylation" value="1 site, 1 O-linked glycan (1 site)"/>
</dbReference>
<dbReference type="iPTMnet" id="Q9P0V3"/>
<dbReference type="PhosphoSitePlus" id="Q9P0V3"/>
<dbReference type="BioMuta" id="SH3BP4"/>
<dbReference type="DMDM" id="74753102"/>
<dbReference type="jPOST" id="Q9P0V3"/>
<dbReference type="MassIVE" id="Q9P0V3"/>
<dbReference type="PaxDb" id="9606-ENSP00000386862"/>
<dbReference type="PeptideAtlas" id="Q9P0V3"/>
<dbReference type="ProteomicsDB" id="83602">
    <molecule id="Q9P0V3-1"/>
</dbReference>
<dbReference type="ProteomicsDB" id="83603">
    <molecule id="Q9P0V3-2"/>
</dbReference>
<dbReference type="Pumba" id="Q9P0V3"/>
<dbReference type="Antibodypedia" id="34462">
    <property type="antibodies" value="183 antibodies from 31 providers"/>
</dbReference>
<dbReference type="DNASU" id="23677"/>
<dbReference type="Ensembl" id="ENST00000344528.8">
    <molecule id="Q9P0V3-1"/>
    <property type="protein sequence ID" value="ENSP00000340237.4"/>
    <property type="gene ID" value="ENSG00000130147.16"/>
</dbReference>
<dbReference type="Ensembl" id="ENST00000392011.7">
    <molecule id="Q9P0V3-1"/>
    <property type="protein sequence ID" value="ENSP00000375867.2"/>
    <property type="gene ID" value="ENSG00000130147.16"/>
</dbReference>
<dbReference type="Ensembl" id="ENST00000409212.5">
    <molecule id="Q9P0V3-1"/>
    <property type="protein sequence ID" value="ENSP00000386862.1"/>
    <property type="gene ID" value="ENSG00000130147.16"/>
</dbReference>
<dbReference type="GeneID" id="23677"/>
<dbReference type="KEGG" id="hsa:23677"/>
<dbReference type="MANE-Select" id="ENST00000392011.7">
    <property type="protein sequence ID" value="ENSP00000375867.2"/>
    <property type="RefSeq nucleotide sequence ID" value="NM_014521.3"/>
    <property type="RefSeq protein sequence ID" value="NP_055336.1"/>
</dbReference>
<dbReference type="UCSC" id="uc002vvp.4">
    <molecule id="Q9P0V3-1"/>
    <property type="organism name" value="human"/>
</dbReference>
<dbReference type="AGR" id="HGNC:10826"/>
<dbReference type="CTD" id="23677"/>
<dbReference type="DisGeNET" id="23677"/>
<dbReference type="GeneCards" id="SH3BP4"/>
<dbReference type="HGNC" id="HGNC:10826">
    <property type="gene designation" value="SH3BP4"/>
</dbReference>
<dbReference type="HPA" id="ENSG00000130147">
    <property type="expression patterns" value="Tissue enhanced (salivary)"/>
</dbReference>
<dbReference type="MalaCards" id="SH3BP4"/>
<dbReference type="MIM" id="605611">
    <property type="type" value="gene"/>
</dbReference>
<dbReference type="neXtProt" id="NX_Q9P0V3"/>
<dbReference type="OpenTargets" id="ENSG00000130147"/>
<dbReference type="PharmGKB" id="PA35734"/>
<dbReference type="VEuPathDB" id="HostDB:ENSG00000130147"/>
<dbReference type="eggNOG" id="ENOG502QTUW">
    <property type="taxonomic scope" value="Eukaryota"/>
</dbReference>
<dbReference type="GeneTree" id="ENSGT00390000013151"/>
<dbReference type="HOGENOM" id="CLU_013080_2_0_1"/>
<dbReference type="InParanoid" id="Q9P0V3"/>
<dbReference type="OMA" id="KHQFILA"/>
<dbReference type="OrthoDB" id="10000126at2759"/>
<dbReference type="PAN-GO" id="Q9P0V3">
    <property type="GO annotations" value="1 GO annotation based on evolutionary models"/>
</dbReference>
<dbReference type="PhylomeDB" id="Q9P0V3"/>
<dbReference type="TreeFam" id="TF105572"/>
<dbReference type="PathwayCommons" id="Q9P0V3"/>
<dbReference type="Reactome" id="R-HSA-9639288">
    <property type="pathway name" value="Amino acids regulate mTORC1"/>
</dbReference>
<dbReference type="SignaLink" id="Q9P0V3"/>
<dbReference type="SIGNOR" id="Q9P0V3"/>
<dbReference type="BioGRID-ORCS" id="23677">
    <property type="hits" value="4 hits in 1148 CRISPR screens"/>
</dbReference>
<dbReference type="ChiTaRS" id="SH3BP4">
    <property type="organism name" value="human"/>
</dbReference>
<dbReference type="GeneWiki" id="SH3BP4"/>
<dbReference type="GenomeRNAi" id="23677"/>
<dbReference type="Pharos" id="Q9P0V3">
    <property type="development level" value="Tbio"/>
</dbReference>
<dbReference type="PRO" id="PR:Q9P0V3"/>
<dbReference type="Proteomes" id="UP000005640">
    <property type="component" value="Chromosome 2"/>
</dbReference>
<dbReference type="RNAct" id="Q9P0V3">
    <property type="molecule type" value="protein"/>
</dbReference>
<dbReference type="Bgee" id="ENSG00000130147">
    <property type="expression patterns" value="Expressed in parotid gland and 197 other cell types or tissues"/>
</dbReference>
<dbReference type="ExpressionAtlas" id="Q9P0V3">
    <property type="expression patterns" value="baseline and differential"/>
</dbReference>
<dbReference type="GO" id="GO:0005905">
    <property type="term" value="C:clathrin-coated pit"/>
    <property type="evidence" value="ECO:0007669"/>
    <property type="project" value="UniProtKB-SubCell"/>
</dbReference>
<dbReference type="GO" id="GO:0030136">
    <property type="term" value="C:clathrin-coated vesicle"/>
    <property type="evidence" value="ECO:0007669"/>
    <property type="project" value="UniProtKB-SubCell"/>
</dbReference>
<dbReference type="GO" id="GO:0005737">
    <property type="term" value="C:cytoplasm"/>
    <property type="evidence" value="ECO:0000314"/>
    <property type="project" value="UniProtKB"/>
</dbReference>
<dbReference type="GO" id="GO:0070062">
    <property type="term" value="C:extracellular exosome"/>
    <property type="evidence" value="ECO:0007005"/>
    <property type="project" value="UniProtKB"/>
</dbReference>
<dbReference type="GO" id="GO:0005634">
    <property type="term" value="C:nucleus"/>
    <property type="evidence" value="ECO:0007669"/>
    <property type="project" value="UniProtKB-SubCell"/>
</dbReference>
<dbReference type="GO" id="GO:0005092">
    <property type="term" value="F:GDP-dissociation inhibitor activity"/>
    <property type="evidence" value="ECO:0000315"/>
    <property type="project" value="UniProtKB"/>
</dbReference>
<dbReference type="GO" id="GO:0042802">
    <property type="term" value="F:identical protein binding"/>
    <property type="evidence" value="ECO:0000353"/>
    <property type="project" value="IntAct"/>
</dbReference>
<dbReference type="GO" id="GO:0031267">
    <property type="term" value="F:small GTPase binding"/>
    <property type="evidence" value="ECO:0000353"/>
    <property type="project" value="UniProtKB"/>
</dbReference>
<dbReference type="GO" id="GO:0071230">
    <property type="term" value="P:cellular response to amino acid stimulus"/>
    <property type="evidence" value="ECO:0000315"/>
    <property type="project" value="UniProtKB"/>
</dbReference>
<dbReference type="GO" id="GO:0006897">
    <property type="term" value="P:endocytosis"/>
    <property type="evidence" value="ECO:0007669"/>
    <property type="project" value="UniProtKB-KW"/>
</dbReference>
<dbReference type="GO" id="GO:0030308">
    <property type="term" value="P:negative regulation of cell growth"/>
    <property type="evidence" value="ECO:0000315"/>
    <property type="project" value="UniProtKB"/>
</dbReference>
<dbReference type="GO" id="GO:0008285">
    <property type="term" value="P:negative regulation of cell population proliferation"/>
    <property type="evidence" value="ECO:0000315"/>
    <property type="project" value="UniProtKB"/>
</dbReference>
<dbReference type="GO" id="GO:0034260">
    <property type="term" value="P:negative regulation of GTPase activity"/>
    <property type="evidence" value="ECO:0000314"/>
    <property type="project" value="UniProtKB"/>
</dbReference>
<dbReference type="GO" id="GO:0032007">
    <property type="term" value="P:negative regulation of TOR signaling"/>
    <property type="evidence" value="ECO:0000315"/>
    <property type="project" value="UniProtKB"/>
</dbReference>
<dbReference type="GO" id="GO:0010508">
    <property type="term" value="P:positive regulation of autophagy"/>
    <property type="evidence" value="ECO:0000315"/>
    <property type="project" value="UniProtKB"/>
</dbReference>
<dbReference type="GO" id="GO:0061462">
    <property type="term" value="P:protein localization to lysosome"/>
    <property type="evidence" value="ECO:0000315"/>
    <property type="project" value="UniProtKB"/>
</dbReference>
<dbReference type="GO" id="GO:0050790">
    <property type="term" value="P:regulation of catalytic activity"/>
    <property type="evidence" value="ECO:0000315"/>
    <property type="project" value="UniProtKB"/>
</dbReference>
<dbReference type="CDD" id="cd11757">
    <property type="entry name" value="SH3_SH3BP4"/>
    <property type="match status" value="1"/>
</dbReference>
<dbReference type="FunFam" id="2.30.30.40:FF:000117">
    <property type="entry name" value="SH3 domain-binding protein 4"/>
    <property type="match status" value="1"/>
</dbReference>
<dbReference type="FunFam" id="2.60.220.30:FF:000008">
    <property type="entry name" value="SH3 domain-binding protein 4"/>
    <property type="match status" value="1"/>
</dbReference>
<dbReference type="Gene3D" id="2.60.220.30">
    <property type="match status" value="1"/>
</dbReference>
<dbReference type="Gene3D" id="2.30.30.40">
    <property type="entry name" value="SH3 Domains"/>
    <property type="match status" value="1"/>
</dbReference>
<dbReference type="InterPro" id="IPR056183">
    <property type="entry name" value="DEATH_SH3BP4"/>
</dbReference>
<dbReference type="InterPro" id="IPR036028">
    <property type="entry name" value="SH3-like_dom_sf"/>
</dbReference>
<dbReference type="InterPro" id="IPR001452">
    <property type="entry name" value="SH3_domain"/>
</dbReference>
<dbReference type="InterPro" id="IPR056181">
    <property type="entry name" value="SH3BP4_C"/>
</dbReference>
<dbReference type="InterPro" id="IPR035456">
    <property type="entry name" value="SH3BP4_SH3"/>
</dbReference>
<dbReference type="InterPro" id="IPR056182">
    <property type="entry name" value="UPA_SH3BP4"/>
</dbReference>
<dbReference type="InterPro" id="IPR000906">
    <property type="entry name" value="ZU5_dom"/>
</dbReference>
<dbReference type="PANTHER" id="PTHR15603:SF3">
    <property type="entry name" value="SH3 DOMAIN-BINDING PROTEIN 4"/>
    <property type="match status" value="1"/>
</dbReference>
<dbReference type="PANTHER" id="PTHR15603">
    <property type="entry name" value="SH3 DOMAIN-CONTAINING PROTEIN"/>
    <property type="match status" value="1"/>
</dbReference>
<dbReference type="Pfam" id="PF24094">
    <property type="entry name" value="DEATH_SH3BP4"/>
    <property type="match status" value="1"/>
</dbReference>
<dbReference type="Pfam" id="PF00018">
    <property type="entry name" value="SH3_1"/>
    <property type="match status" value="1"/>
</dbReference>
<dbReference type="Pfam" id="PF07653">
    <property type="entry name" value="SH3_2"/>
    <property type="match status" value="1"/>
</dbReference>
<dbReference type="Pfam" id="PF23637">
    <property type="entry name" value="SH3BP4_C"/>
    <property type="match status" value="1"/>
</dbReference>
<dbReference type="Pfam" id="PF23640">
    <property type="entry name" value="UPA_SH3BP4"/>
    <property type="match status" value="1"/>
</dbReference>
<dbReference type="Pfam" id="PF00791">
    <property type="entry name" value="ZU5"/>
    <property type="match status" value="1"/>
</dbReference>
<dbReference type="SMART" id="SM00326">
    <property type="entry name" value="SH3"/>
    <property type="match status" value="1"/>
</dbReference>
<dbReference type="SUPFAM" id="SSF50044">
    <property type="entry name" value="SH3-domain"/>
    <property type="match status" value="1"/>
</dbReference>
<dbReference type="PROSITE" id="PS50002">
    <property type="entry name" value="SH3"/>
    <property type="match status" value="2"/>
</dbReference>
<dbReference type="PROSITE" id="PS51145">
    <property type="entry name" value="ZU5"/>
    <property type="match status" value="1"/>
</dbReference>
<reference key="1">
    <citation type="journal article" date="1999" name="Genomics">
        <title>Cloning, chromosomal localization, and characterization of cDNA from a novel gene, SH3BP4, expressed by human corneal fibroblasts.</title>
        <authorList>
            <person name="Dunlevy J.R."/>
            <person name="Berryhill B.L."/>
            <person name="Vergnes J.-P."/>
            <person name="SundarRaj N."/>
            <person name="Hassell J.R."/>
        </authorList>
    </citation>
    <scope>NUCLEOTIDE SEQUENCE [MRNA] (ISOFORM 1)</scope>
    <scope>TISSUE SPECIFICITY</scope>
    <source>
        <tissue>Corneal fibroblast</tissue>
    </source>
</reference>
<reference key="2">
    <citation type="journal article" date="2005" name="Cell">
        <title>TTP specifically regulates the internalization of the transferrin receptor.</title>
        <authorList>
            <person name="Tosoni D."/>
            <person name="Puri C."/>
            <person name="Confalonieri S."/>
            <person name="Salcini A.E."/>
            <person name="De Camilli P."/>
            <person name="Tacchetti C."/>
            <person name="Di Fiore P.P."/>
        </authorList>
    </citation>
    <scope>NUCLEOTIDE SEQUENCE [MRNA] (ISOFORM 1)</scope>
    <scope>FUNCTION IN ENDOCYTOSIS</scope>
    <scope>INTERACTION WITH AP-2; CLATHRIN; DNM2; EPS15 AND TFRC</scope>
    <scope>OLIGOMERIZATION</scope>
    <scope>PHOSPHORYLATION</scope>
    <scope>SUBCELLULAR LOCATION</scope>
    <scope>MUTAGENESIS OF TRP-92</scope>
    <scope>VARIANTS THR-155 AND THR-197</scope>
    <source>
        <tissue>Placenta</tissue>
    </source>
</reference>
<reference key="3">
    <citation type="journal article" date="2005" name="Nature">
        <title>Generation and annotation of the DNA sequences of human chromosomes 2 and 4.</title>
        <authorList>
            <person name="Hillier L.W."/>
            <person name="Graves T.A."/>
            <person name="Fulton R.S."/>
            <person name="Fulton L.A."/>
            <person name="Pepin K.H."/>
            <person name="Minx P."/>
            <person name="Wagner-McPherson C."/>
            <person name="Layman D."/>
            <person name="Wylie K."/>
            <person name="Sekhon M."/>
            <person name="Becker M.C."/>
            <person name="Fewell G.A."/>
            <person name="Delehaunty K.D."/>
            <person name="Miner T.L."/>
            <person name="Nash W.E."/>
            <person name="Kremitzki C."/>
            <person name="Oddy L."/>
            <person name="Du H."/>
            <person name="Sun H."/>
            <person name="Bradshaw-Cordum H."/>
            <person name="Ali J."/>
            <person name="Carter J."/>
            <person name="Cordes M."/>
            <person name="Harris A."/>
            <person name="Isak A."/>
            <person name="van Brunt A."/>
            <person name="Nguyen C."/>
            <person name="Du F."/>
            <person name="Courtney L."/>
            <person name="Kalicki J."/>
            <person name="Ozersky P."/>
            <person name="Abbott S."/>
            <person name="Armstrong J."/>
            <person name="Belter E.A."/>
            <person name="Caruso L."/>
            <person name="Cedroni M."/>
            <person name="Cotton M."/>
            <person name="Davidson T."/>
            <person name="Desai A."/>
            <person name="Elliott G."/>
            <person name="Erb T."/>
            <person name="Fronick C."/>
            <person name="Gaige T."/>
            <person name="Haakenson W."/>
            <person name="Haglund K."/>
            <person name="Holmes A."/>
            <person name="Harkins R."/>
            <person name="Kim K."/>
            <person name="Kruchowski S.S."/>
            <person name="Strong C.M."/>
            <person name="Grewal N."/>
            <person name="Goyea E."/>
            <person name="Hou S."/>
            <person name="Levy A."/>
            <person name="Martinka S."/>
            <person name="Mead K."/>
            <person name="McLellan M.D."/>
            <person name="Meyer R."/>
            <person name="Randall-Maher J."/>
            <person name="Tomlinson C."/>
            <person name="Dauphin-Kohlberg S."/>
            <person name="Kozlowicz-Reilly A."/>
            <person name="Shah N."/>
            <person name="Swearengen-Shahid S."/>
            <person name="Snider J."/>
            <person name="Strong J.T."/>
            <person name="Thompson J."/>
            <person name="Yoakum M."/>
            <person name="Leonard S."/>
            <person name="Pearman C."/>
            <person name="Trani L."/>
            <person name="Radionenko M."/>
            <person name="Waligorski J.E."/>
            <person name="Wang C."/>
            <person name="Rock S.M."/>
            <person name="Tin-Wollam A.-M."/>
            <person name="Maupin R."/>
            <person name="Latreille P."/>
            <person name="Wendl M.C."/>
            <person name="Yang S.-P."/>
            <person name="Pohl C."/>
            <person name="Wallis J.W."/>
            <person name="Spieth J."/>
            <person name="Bieri T.A."/>
            <person name="Berkowicz N."/>
            <person name="Nelson J.O."/>
            <person name="Osborne J."/>
            <person name="Ding L."/>
            <person name="Meyer R."/>
            <person name="Sabo A."/>
            <person name="Shotland Y."/>
            <person name="Sinha P."/>
            <person name="Wohldmann P.E."/>
            <person name="Cook L.L."/>
            <person name="Hickenbotham M.T."/>
            <person name="Eldred J."/>
            <person name="Williams D."/>
            <person name="Jones T.A."/>
            <person name="She X."/>
            <person name="Ciccarelli F.D."/>
            <person name="Izaurralde E."/>
            <person name="Taylor J."/>
            <person name="Schmutz J."/>
            <person name="Myers R.M."/>
            <person name="Cox D.R."/>
            <person name="Huang X."/>
            <person name="McPherson J.D."/>
            <person name="Mardis E.R."/>
            <person name="Clifton S.W."/>
            <person name="Warren W.C."/>
            <person name="Chinwalla A.T."/>
            <person name="Eddy S.R."/>
            <person name="Marra M.A."/>
            <person name="Ovcharenko I."/>
            <person name="Furey T.S."/>
            <person name="Miller W."/>
            <person name="Eichler E.E."/>
            <person name="Bork P."/>
            <person name="Suyama M."/>
            <person name="Torrents D."/>
            <person name="Waterston R.H."/>
            <person name="Wilson R.K."/>
        </authorList>
    </citation>
    <scope>NUCLEOTIDE SEQUENCE [LARGE SCALE GENOMIC DNA]</scope>
</reference>
<reference key="4">
    <citation type="journal article" date="2004" name="Genome Res.">
        <title>The status, quality, and expansion of the NIH full-length cDNA project: the Mammalian Gene Collection (MGC).</title>
        <authorList>
            <consortium name="The MGC Project Team"/>
        </authorList>
    </citation>
    <scope>NUCLEOTIDE SEQUENCE [LARGE SCALE MRNA] (ISOFORM 1)</scope>
    <source>
        <tissue>Eye</tissue>
    </source>
</reference>
<reference key="5">
    <citation type="journal article" date="1997" name="Genes Dev.">
        <title>Binding specificity and in vivo targets of the EH domain, a novel protein-protein interaction module.</title>
        <authorList>
            <person name="Salcini A.E."/>
            <person name="Confalonieri S."/>
            <person name="Doria M."/>
            <person name="Santolini E."/>
            <person name="Tassi E."/>
            <person name="Minenkova O."/>
            <person name="Cesareni G."/>
            <person name="Pelicci P.G."/>
            <person name="Di Fiore P.P."/>
        </authorList>
    </citation>
    <scope>NUCLEOTIDE SEQUENCE [MRNA] OF 74-963 (ISOFORM 2)</scope>
    <scope>INTERACTION WITH EPS15</scope>
    <source>
        <tissue>Fibroblast</tissue>
    </source>
</reference>
<reference key="6">
    <citation type="journal article" date="2004" name="Mol. Vis.">
        <title>Nuclear and plasma membrane localization of SH3BP4 in retinal pigment epithelial cells.</title>
        <authorList>
            <person name="Khanobdee K."/>
            <person name="Kolberg J.B."/>
            <person name="Dunlevy J.R."/>
        </authorList>
    </citation>
    <scope>SUBCELLULAR LOCATION</scope>
    <scope>TISSUE SPECIFICITY</scope>
</reference>
<reference key="7">
    <citation type="journal article" date="2006" name="Cell">
        <title>Global, in vivo, and site-specific phosphorylation dynamics in signaling networks.</title>
        <authorList>
            <person name="Olsen J.V."/>
            <person name="Blagoev B."/>
            <person name="Gnad F."/>
            <person name="Macek B."/>
            <person name="Kumar C."/>
            <person name="Mortensen P."/>
            <person name="Mann M."/>
        </authorList>
    </citation>
    <scope>IDENTIFICATION BY MASS SPECTROMETRY [LARGE SCALE ANALYSIS]</scope>
    <source>
        <tissue>Cervix carcinoma</tissue>
    </source>
</reference>
<reference key="8">
    <citation type="journal article" date="2008" name="Mol. Cell">
        <title>Kinase-selective enrichment enables quantitative phosphoproteomics of the kinome across the cell cycle.</title>
        <authorList>
            <person name="Daub H."/>
            <person name="Olsen J.V."/>
            <person name="Bairlein M."/>
            <person name="Gnad F."/>
            <person name="Oppermann F.S."/>
            <person name="Korner R."/>
            <person name="Greff Z."/>
            <person name="Keri G."/>
            <person name="Stemmann O."/>
            <person name="Mann M."/>
        </authorList>
    </citation>
    <scope>PHOSPHORYLATION [LARGE SCALE ANALYSIS] AT SER-131</scope>
    <scope>IDENTIFICATION BY MASS SPECTROMETRY [LARGE SCALE ANALYSIS]</scope>
    <source>
        <tissue>Cervix carcinoma</tissue>
    </source>
</reference>
<reference key="9">
    <citation type="journal article" date="2008" name="Proc. Natl. Acad. Sci. U.S.A.">
        <title>A quantitative atlas of mitotic phosphorylation.</title>
        <authorList>
            <person name="Dephoure N."/>
            <person name="Zhou C."/>
            <person name="Villen J."/>
            <person name="Beausoleil S.A."/>
            <person name="Bakalarski C.E."/>
            <person name="Elledge S.J."/>
            <person name="Gygi S.P."/>
        </authorList>
    </citation>
    <scope>PHOSPHORYLATION [LARGE SCALE ANALYSIS] AT SER-246</scope>
    <scope>IDENTIFICATION BY MASS SPECTROMETRY [LARGE SCALE ANALYSIS]</scope>
    <source>
        <tissue>Cervix carcinoma</tissue>
    </source>
</reference>
<reference key="10">
    <citation type="journal article" date="2010" name="Sci. Signal.">
        <title>Quantitative phosphoproteomics reveals widespread full phosphorylation site occupancy during mitosis.</title>
        <authorList>
            <person name="Olsen J.V."/>
            <person name="Vermeulen M."/>
            <person name="Santamaria A."/>
            <person name="Kumar C."/>
            <person name="Miller M.L."/>
            <person name="Jensen L.J."/>
            <person name="Gnad F."/>
            <person name="Cox J."/>
            <person name="Jensen T.S."/>
            <person name="Nigg E.A."/>
            <person name="Brunak S."/>
            <person name="Mann M."/>
        </authorList>
    </citation>
    <scope>PHOSPHORYLATION [LARGE SCALE ANALYSIS] AT SER-637</scope>
    <scope>IDENTIFICATION BY MASS SPECTROMETRY [LARGE SCALE ANALYSIS]</scope>
    <source>
        <tissue>Cervix carcinoma</tissue>
    </source>
</reference>
<reference key="11">
    <citation type="journal article" date="2012" name="Mol. Cell">
        <title>SH3BP4 is a negative regulator of amino acid-Rag GTPase-mTORC1 signaling.</title>
        <authorList>
            <person name="Kim Y.M."/>
            <person name="Stone M."/>
            <person name="Hwang T.H."/>
            <person name="Kim Y.G."/>
            <person name="Dunlevy J.R."/>
            <person name="Griffin T.J."/>
            <person name="Kim D.H."/>
        </authorList>
    </citation>
    <scope>FUNCTION IN MTORC1 SIGNALING</scope>
    <scope>INTERACTION WITH RRAGA; RRAGB; RRAGC AND RRAGD</scope>
    <scope>MUTAGENESIS OF TRP-92</scope>
</reference>
<reference key="12">
    <citation type="journal article" date="2013" name="J. Proteome Res.">
        <title>Toward a comprehensive characterization of a human cancer cell phosphoproteome.</title>
        <authorList>
            <person name="Zhou H."/>
            <person name="Di Palma S."/>
            <person name="Preisinger C."/>
            <person name="Peng M."/>
            <person name="Polat A.N."/>
            <person name="Heck A.J."/>
            <person name="Mohammed S."/>
        </authorList>
    </citation>
    <scope>PHOSPHORYLATION [LARGE SCALE ANALYSIS] AT SER-246; SER-279 AND SER-637</scope>
    <scope>IDENTIFICATION BY MASS SPECTROMETRY [LARGE SCALE ANALYSIS]</scope>
    <source>
        <tissue>Cervix carcinoma</tissue>
    </source>
</reference>
<reference key="13">
    <citation type="journal article" date="2014" name="J. Proteomics">
        <title>An enzyme assisted RP-RPLC approach for in-depth analysis of human liver phosphoproteome.</title>
        <authorList>
            <person name="Bian Y."/>
            <person name="Song C."/>
            <person name="Cheng K."/>
            <person name="Dong M."/>
            <person name="Wang F."/>
            <person name="Huang J."/>
            <person name="Sun D."/>
            <person name="Wang L."/>
            <person name="Ye M."/>
            <person name="Zou H."/>
        </authorList>
    </citation>
    <scope>PHOSPHORYLATION [LARGE SCALE ANALYSIS] AT SER-296</scope>
    <scope>IDENTIFICATION BY MASS SPECTROMETRY [LARGE SCALE ANALYSIS]</scope>
    <source>
        <tissue>Liver</tissue>
    </source>
</reference>
<reference key="14">
    <citation type="journal article" date="2019" name="J. Virol.">
        <title>MC159 of molluscum contagiosum virus suppresses autophagy by recruiting cellular SH3BP4 via an SH3 domain-mediated interaction.</title>
        <authorList>
            <person name="Schmotz C."/>
            <person name="Ugurlu H."/>
            <person name="Vilen S."/>
            <person name="Shrestha S."/>
            <person name="Fagerlund R."/>
            <person name="Saksela K."/>
        </authorList>
    </citation>
    <scope>INTERACTION WITH MOLLUSCUM CONTAGIOSUM VIRUS PROTEIN MC159L (MICROBIAL INFECTION)</scope>
</reference>